<reference key="1">
    <citation type="journal article" date="1997" name="J. Bacteriol.">
        <title>High-level genetic diversity in the vapD chromosomal region of Helicobacter pylori.</title>
        <authorList>
            <person name="Cao P."/>
            <person name="Cover T.L."/>
        </authorList>
    </citation>
    <scope>NUCLEOTIDE SEQUENCE [GENOMIC DNA]</scope>
    <source>
        <strain>ATCC 49503 / 60190</strain>
    </source>
</reference>
<reference key="2">
    <citation type="journal article" date="1997" name="Nature">
        <title>The complete genome sequence of the gastric pathogen Helicobacter pylori.</title>
        <authorList>
            <person name="Tomb J.-F."/>
            <person name="White O."/>
            <person name="Kerlavage A.R."/>
            <person name="Clayton R.A."/>
            <person name="Sutton G.G."/>
            <person name="Fleischmann R.D."/>
            <person name="Ketchum K.A."/>
            <person name="Klenk H.-P."/>
            <person name="Gill S.R."/>
            <person name="Dougherty B.A."/>
            <person name="Nelson K.E."/>
            <person name="Quackenbush J."/>
            <person name="Zhou L."/>
            <person name="Kirkness E.F."/>
            <person name="Peterson S.N."/>
            <person name="Loftus B.J."/>
            <person name="Richardson D.L."/>
            <person name="Dodson R.J."/>
            <person name="Khalak H.G."/>
            <person name="Glodek A."/>
            <person name="McKenney K."/>
            <person name="FitzGerald L.M."/>
            <person name="Lee N."/>
            <person name="Adams M.D."/>
            <person name="Hickey E.K."/>
            <person name="Berg D.E."/>
            <person name="Gocayne J.D."/>
            <person name="Utterback T.R."/>
            <person name="Peterson J.D."/>
            <person name="Kelley J.M."/>
            <person name="Cotton M.D."/>
            <person name="Weidman J.F."/>
            <person name="Fujii C."/>
            <person name="Bowman C."/>
            <person name="Watthey L."/>
            <person name="Wallin E."/>
            <person name="Hayes W.S."/>
            <person name="Borodovsky M."/>
            <person name="Karp P.D."/>
            <person name="Smith H.O."/>
            <person name="Fraser C.M."/>
            <person name="Venter J.C."/>
        </authorList>
    </citation>
    <scope>NUCLEOTIDE SEQUENCE [LARGE SCALE GENOMIC DNA]</scope>
    <source>
        <strain>ATCC 700392 / 26695</strain>
    </source>
</reference>
<gene>
    <name type="primary">vdlD</name>
    <name type="ordered locus">HP_0891</name>
</gene>
<name>VDLD_HELPY</name>
<protein>
    <recommendedName>
        <fullName>Protein VdlD</fullName>
    </recommendedName>
</protein>
<comment type="similarity">
    <text evidence="2">Belongs to the acyl coenzyme A hydrolase family.</text>
</comment>
<keyword id="KW-0378">Hydrolase</keyword>
<keyword id="KW-1185">Reference proteome</keyword>
<feature type="chain" id="PRO_0000053815" description="Protein VdlD">
    <location>
        <begin position="1"/>
        <end position="174"/>
    </location>
</feature>
<feature type="domain" description="HotDog ACOT-type" evidence="1">
    <location>
        <begin position="20"/>
        <end position="132"/>
    </location>
</feature>
<feature type="sequence conflict" description="In Ref. 1; AAC45242." evidence="2" ref="1">
    <original>H</original>
    <variation>R</variation>
    <location>
        <position position="8"/>
    </location>
</feature>
<accession>P0A0Q7</accession>
<accession>O05729</accession>
<dbReference type="EMBL" id="U94318">
    <property type="protein sequence ID" value="AAC45242.1"/>
    <property type="molecule type" value="Genomic_DNA"/>
</dbReference>
<dbReference type="EMBL" id="AE000511">
    <property type="protein sequence ID" value="AAD07940.1"/>
    <property type="molecule type" value="Genomic_DNA"/>
</dbReference>
<dbReference type="PIR" id="C64631">
    <property type="entry name" value="C64631"/>
</dbReference>
<dbReference type="PIR" id="T09451">
    <property type="entry name" value="T09451"/>
</dbReference>
<dbReference type="RefSeq" id="NP_207684.1">
    <property type="nucleotide sequence ID" value="NC_000915.1"/>
</dbReference>
<dbReference type="RefSeq" id="WP_001135603.1">
    <property type="nucleotide sequence ID" value="NC_018939.1"/>
</dbReference>
<dbReference type="SMR" id="P0A0Q7"/>
<dbReference type="FunCoup" id="P0A0Q7">
    <property type="interactions" value="135"/>
</dbReference>
<dbReference type="IntAct" id="P0A0Q7">
    <property type="interactions" value="3"/>
</dbReference>
<dbReference type="MINT" id="P0A0Q7"/>
<dbReference type="STRING" id="85962.HP_0891"/>
<dbReference type="PaxDb" id="85962-C694_04575"/>
<dbReference type="EnsemblBacteria" id="AAD07940">
    <property type="protein sequence ID" value="AAD07940"/>
    <property type="gene ID" value="HP_0891"/>
</dbReference>
<dbReference type="KEGG" id="heo:C694_04575"/>
<dbReference type="KEGG" id="hpy:HP_0891"/>
<dbReference type="PATRIC" id="fig|85962.47.peg.949"/>
<dbReference type="eggNOG" id="COG1607">
    <property type="taxonomic scope" value="Bacteria"/>
</dbReference>
<dbReference type="InParanoid" id="P0A0Q7"/>
<dbReference type="OrthoDB" id="9809430at2"/>
<dbReference type="PhylomeDB" id="P0A0Q7"/>
<dbReference type="Proteomes" id="UP000000429">
    <property type="component" value="Chromosome"/>
</dbReference>
<dbReference type="GO" id="GO:0005737">
    <property type="term" value="C:cytoplasm"/>
    <property type="evidence" value="ECO:0000318"/>
    <property type="project" value="GO_Central"/>
</dbReference>
<dbReference type="GO" id="GO:0005829">
    <property type="term" value="C:cytosol"/>
    <property type="evidence" value="ECO:0000318"/>
    <property type="project" value="GO_Central"/>
</dbReference>
<dbReference type="GO" id="GO:0052816">
    <property type="term" value="F:long-chain fatty acyl-CoA hydrolase activity"/>
    <property type="evidence" value="ECO:0000318"/>
    <property type="project" value="GO_Central"/>
</dbReference>
<dbReference type="GO" id="GO:0006637">
    <property type="term" value="P:acyl-CoA metabolic process"/>
    <property type="evidence" value="ECO:0000318"/>
    <property type="project" value="GO_Central"/>
</dbReference>
<dbReference type="CDD" id="cd03442">
    <property type="entry name" value="BFIT_BACH"/>
    <property type="match status" value="1"/>
</dbReference>
<dbReference type="FunFam" id="3.10.129.10:FF:000035">
    <property type="entry name" value="Thioesterase superfamily protein"/>
    <property type="match status" value="1"/>
</dbReference>
<dbReference type="Gene3D" id="3.10.129.10">
    <property type="entry name" value="Hotdog Thioesterase"/>
    <property type="match status" value="1"/>
</dbReference>
<dbReference type="InterPro" id="IPR040170">
    <property type="entry name" value="Cytosol_ACT"/>
</dbReference>
<dbReference type="InterPro" id="IPR033120">
    <property type="entry name" value="HOTDOG_ACOT"/>
</dbReference>
<dbReference type="InterPro" id="IPR029069">
    <property type="entry name" value="HotDog_dom_sf"/>
</dbReference>
<dbReference type="InterPro" id="IPR006683">
    <property type="entry name" value="Thioestr_dom"/>
</dbReference>
<dbReference type="PANTHER" id="PTHR11049">
    <property type="entry name" value="ACYL COENZYME A THIOESTER HYDROLASE"/>
    <property type="match status" value="1"/>
</dbReference>
<dbReference type="PANTHER" id="PTHR11049:SF16">
    <property type="entry name" value="PROTEIN VDLD"/>
    <property type="match status" value="1"/>
</dbReference>
<dbReference type="Pfam" id="PF03061">
    <property type="entry name" value="4HBT"/>
    <property type="match status" value="1"/>
</dbReference>
<dbReference type="SUPFAM" id="SSF54637">
    <property type="entry name" value="Thioesterase/thiol ester dehydrase-isomerase"/>
    <property type="match status" value="1"/>
</dbReference>
<dbReference type="PROSITE" id="PS51770">
    <property type="entry name" value="HOTDOG_ACOT"/>
    <property type="match status" value="1"/>
</dbReference>
<proteinExistence type="inferred from homology"/>
<sequence>MPQIQSSHSNHFDFTIDTADRTKLLMSYLVVPTTANFNNVMHGGELLNLLDKVAYVCSTRYCAKGTVTLSVDGVTFKYPIPVGNLLTFLASINYVGNTSCEVGIKVLSEDIKTREITHTNSCYFTMVAVENGKPTPMPKYEPKTEVEIRRYEGALKRKEMRTRGYLKSGKHEGV</sequence>
<organism>
    <name type="scientific">Helicobacter pylori (strain ATCC 700392 / 26695)</name>
    <name type="common">Campylobacter pylori</name>
    <dbReference type="NCBI Taxonomy" id="85962"/>
    <lineage>
        <taxon>Bacteria</taxon>
        <taxon>Pseudomonadati</taxon>
        <taxon>Campylobacterota</taxon>
        <taxon>Epsilonproteobacteria</taxon>
        <taxon>Campylobacterales</taxon>
        <taxon>Helicobacteraceae</taxon>
        <taxon>Helicobacter</taxon>
    </lineage>
</organism>
<evidence type="ECO:0000255" key="1">
    <source>
        <dbReference type="PROSITE-ProRule" id="PRU01106"/>
    </source>
</evidence>
<evidence type="ECO:0000305" key="2"/>